<dbReference type="EMBL" id="CR858281">
    <property type="protein sequence ID" value="CAH90518.1"/>
    <property type="molecule type" value="mRNA"/>
</dbReference>
<dbReference type="EMBL" id="CR859655">
    <property type="protein sequence ID" value="CAH91816.1"/>
    <property type="molecule type" value="mRNA"/>
</dbReference>
<dbReference type="EMBL" id="CR861316">
    <property type="protein sequence ID" value="CAH93381.1"/>
    <property type="molecule type" value="mRNA"/>
</dbReference>
<dbReference type="RefSeq" id="NP_001125274.1">
    <molecule id="Q5RCI9-1"/>
    <property type="nucleotide sequence ID" value="NM_001131802.2"/>
</dbReference>
<dbReference type="RefSeq" id="NP_001128906.1">
    <molecule id="Q5RCI9-2"/>
    <property type="nucleotide sequence ID" value="NM_001135434.2"/>
</dbReference>
<dbReference type="RefSeq" id="NP_001417680.1">
    <molecule id="Q5RCI9-2"/>
    <property type="nucleotide sequence ID" value="NM_001430751.1"/>
</dbReference>
<dbReference type="RefSeq" id="NP_001417681.1">
    <molecule id="Q5RCI9-2"/>
    <property type="nucleotide sequence ID" value="NM_001430752.1"/>
</dbReference>
<dbReference type="FunCoup" id="Q5RCI9">
    <property type="interactions" value="3662"/>
</dbReference>
<dbReference type="STRING" id="9601.ENSPPYP00000015195"/>
<dbReference type="Ensembl" id="ENSPPYT00000015801.3">
    <molecule id="Q5RCI9-1"/>
    <property type="protein sequence ID" value="ENSPPYP00000015195.3"/>
    <property type="gene ID" value="ENSPPYG00000013591.3"/>
</dbReference>
<dbReference type="Ensembl" id="ENSPPYT00000057725.1">
    <molecule id="Q5RCI9-2"/>
    <property type="protein sequence ID" value="ENSPPYP00000039126.1"/>
    <property type="gene ID" value="ENSPPYG00000013591.3"/>
</dbReference>
<dbReference type="GeneID" id="100172171"/>
<dbReference type="KEGG" id="pon:100172171"/>
<dbReference type="CTD" id="57092"/>
<dbReference type="eggNOG" id="ENOG502QWEZ">
    <property type="taxonomic scope" value="Eukaryota"/>
</dbReference>
<dbReference type="GeneTree" id="ENSGT00390000010218"/>
<dbReference type="HOGENOM" id="CLU_118645_1_0_1"/>
<dbReference type="InParanoid" id="Q5RCI9"/>
<dbReference type="OMA" id="EKDMMAD"/>
<dbReference type="OrthoDB" id="10068198at2759"/>
<dbReference type="Proteomes" id="UP000001595">
    <property type="component" value="Chromosome 3"/>
</dbReference>
<dbReference type="GO" id="GO:0016604">
    <property type="term" value="C:nuclear body"/>
    <property type="evidence" value="ECO:0007669"/>
    <property type="project" value="Ensembl"/>
</dbReference>
<dbReference type="GO" id="GO:0043161">
    <property type="term" value="P:proteasome-mediated ubiquitin-dependent protein catabolic process"/>
    <property type="evidence" value="ECO:0007669"/>
    <property type="project" value="Ensembl"/>
</dbReference>
<dbReference type="GO" id="GO:0016567">
    <property type="term" value="P:protein ubiquitination"/>
    <property type="evidence" value="ECO:0007669"/>
    <property type="project" value="Ensembl"/>
</dbReference>
<dbReference type="InterPro" id="IPR029169">
    <property type="entry name" value="PCNP"/>
</dbReference>
<dbReference type="PANTHER" id="PTHR16523">
    <property type="entry name" value="PEST PROTEOLYTIC SIGNAL-CONTAINING NUCLEAR PROTEIN"/>
    <property type="match status" value="1"/>
</dbReference>
<dbReference type="PANTHER" id="PTHR16523:SF6">
    <property type="entry name" value="PEST PROTEOLYTIC SIGNAL-CONTAINING NUCLEAR PROTEIN"/>
    <property type="match status" value="1"/>
</dbReference>
<dbReference type="Pfam" id="PF15473">
    <property type="entry name" value="PCNP"/>
    <property type="match status" value="1"/>
</dbReference>
<feature type="initiator methionine" description="Removed" evidence="2">
    <location>
        <position position="1"/>
    </location>
</feature>
<feature type="chain" id="PRO_0000058255" description="PEST proteolytic signal-containing nuclear protein">
    <location>
        <begin position="2"/>
        <end position="178"/>
    </location>
</feature>
<feature type="region of interest" description="Disordered" evidence="3">
    <location>
        <begin position="1"/>
        <end position="84"/>
    </location>
</feature>
<feature type="region of interest" description="Disordered" evidence="3">
    <location>
        <begin position="134"/>
        <end position="178"/>
    </location>
</feature>
<feature type="compositionally biased region" description="Basic and acidic residues" evidence="3">
    <location>
        <begin position="1"/>
        <end position="15"/>
    </location>
</feature>
<feature type="compositionally biased region" description="Low complexity" evidence="3">
    <location>
        <begin position="37"/>
        <end position="47"/>
    </location>
</feature>
<feature type="compositionally biased region" description="Polar residues" evidence="3">
    <location>
        <begin position="139"/>
        <end position="149"/>
    </location>
</feature>
<feature type="compositionally biased region" description="Basic and acidic residues" evidence="3">
    <location>
        <begin position="160"/>
        <end position="178"/>
    </location>
</feature>
<feature type="modified residue" description="N-acetylalanine" evidence="2">
    <location>
        <position position="2"/>
    </location>
</feature>
<feature type="modified residue" description="Phosphoserine" evidence="2">
    <location>
        <position position="53"/>
    </location>
</feature>
<feature type="modified residue" description="N6-acetyllysine" evidence="2">
    <location>
        <position position="64"/>
    </location>
</feature>
<feature type="modified residue" description="Phosphoserine" evidence="2">
    <location>
        <position position="77"/>
    </location>
</feature>
<feature type="modified residue" description="Phosphoserine" evidence="2">
    <location>
        <position position="87"/>
    </location>
</feature>
<feature type="modified residue" description="Phosphoserine" evidence="2">
    <location>
        <position position="119"/>
    </location>
</feature>
<feature type="modified residue" description="Phosphothreonine" evidence="2">
    <location>
        <position position="139"/>
    </location>
</feature>
<feature type="modified residue" description="Phosphoserine" evidence="2">
    <location>
        <position position="147"/>
    </location>
</feature>
<feature type="modified residue" description="N6-acetyllysine" evidence="2">
    <location>
        <position position="150"/>
    </location>
</feature>
<feature type="modified residue" description="N6-acetyllysine" evidence="2">
    <location>
        <position position="152"/>
    </location>
</feature>
<feature type="splice variant" id="VSP_013882" description="In isoform 2." evidence="4">
    <location>
        <begin position="1"/>
        <end position="123"/>
    </location>
</feature>
<organism>
    <name type="scientific">Pongo abelii</name>
    <name type="common">Sumatran orangutan</name>
    <name type="synonym">Pongo pygmaeus abelii</name>
    <dbReference type="NCBI Taxonomy" id="9601"/>
    <lineage>
        <taxon>Eukaryota</taxon>
        <taxon>Metazoa</taxon>
        <taxon>Chordata</taxon>
        <taxon>Craniata</taxon>
        <taxon>Vertebrata</taxon>
        <taxon>Euteleostomi</taxon>
        <taxon>Mammalia</taxon>
        <taxon>Eutheria</taxon>
        <taxon>Euarchontoglires</taxon>
        <taxon>Primates</taxon>
        <taxon>Haplorrhini</taxon>
        <taxon>Catarrhini</taxon>
        <taxon>Hominidae</taxon>
        <taxon>Pongo</taxon>
    </lineage>
</organism>
<name>PCNP_PONAB</name>
<sequence length="178" mass="18967">MADGKAGEEKPEKSQRAGAAGGPEEEAEKPVKTKTVSSSNGGESSSRSAEKRSAEEEAVDLPTKPTKISKFGFAIGSQTTKKASAISIKLGSSKPKETVPTLAPKTLSVAAAFNEDEDSEPEEMPPEAKMRMKNIGRDTPTSAGPNSFNKGKHGFSDNQKLWERNIKSHLGNVHDQDN</sequence>
<proteinExistence type="evidence at transcript level"/>
<accession>Q5RCI9</accession>
<accession>Q5R8U4</accession>
<comment type="function">
    <text evidence="1">May be involved in cell cycle regulation.</text>
</comment>
<comment type="subunit">
    <text evidence="1">Interacts with UHRF2/NIRF.</text>
</comment>
<comment type="subcellular location">
    <subcellularLocation>
        <location evidence="1">Nucleus</location>
    </subcellularLocation>
</comment>
<comment type="alternative products">
    <event type="alternative splicing"/>
    <isoform>
        <id>Q5RCI9-1</id>
        <name>1</name>
        <sequence type="displayed"/>
    </isoform>
    <isoform>
        <id>Q5RCI9-2</id>
        <name>2</name>
        <sequence type="described" ref="VSP_013882"/>
    </isoform>
</comment>
<comment type="PTM">
    <text evidence="1">Ubiquitinated; mediated by UHRF2 and leading to its subsequent proteasomal degradation.</text>
</comment>
<comment type="PTM">
    <text evidence="1">N-terminally acetylated in a HYPK-dependent manner by the NatA acetyltransferase complex which is composed of NAA10 and NAA15.</text>
</comment>
<gene>
    <name type="primary">PCNP</name>
</gene>
<evidence type="ECO:0000250" key="1"/>
<evidence type="ECO:0000250" key="2">
    <source>
        <dbReference type="UniProtKB" id="Q8WW12"/>
    </source>
</evidence>
<evidence type="ECO:0000256" key="3">
    <source>
        <dbReference type="SAM" id="MobiDB-lite"/>
    </source>
</evidence>
<evidence type="ECO:0000303" key="4">
    <source ref="1"/>
</evidence>
<reference key="1">
    <citation type="submission" date="2004-11" db="EMBL/GenBank/DDBJ databases">
        <authorList>
            <consortium name="The German cDNA consortium"/>
        </authorList>
    </citation>
    <scope>NUCLEOTIDE SEQUENCE [LARGE SCALE MRNA] (ISOFORMS 1 AND 2)</scope>
    <source>
        <tissue>Brain cortex</tissue>
    </source>
</reference>
<protein>
    <recommendedName>
        <fullName>PEST proteolytic signal-containing nuclear protein</fullName>
        <shortName>PCNP</shortName>
        <shortName>PEST-containing nuclear protein</shortName>
    </recommendedName>
</protein>
<keyword id="KW-0007">Acetylation</keyword>
<keyword id="KW-0025">Alternative splicing</keyword>
<keyword id="KW-0131">Cell cycle</keyword>
<keyword id="KW-0539">Nucleus</keyword>
<keyword id="KW-0597">Phosphoprotein</keyword>
<keyword id="KW-1185">Reference proteome</keyword>
<keyword id="KW-0832">Ubl conjugation</keyword>